<accession>Q2Y9Z4</accession>
<proteinExistence type="inferred from homology"/>
<comment type="function">
    <text evidence="1">One of the proteins required for the normal export of preproteins out of the cell cytoplasm. It is a molecular chaperone that binds to a subset of precursor proteins, maintaining them in a translocation-competent state. It also specifically binds to its receptor SecA.</text>
</comment>
<comment type="subunit">
    <text evidence="1">Homotetramer, a dimer of dimers. One homotetramer interacts with 1 SecA dimer.</text>
</comment>
<comment type="subcellular location">
    <subcellularLocation>
        <location evidence="1">Cytoplasm</location>
    </subcellularLocation>
</comment>
<comment type="similarity">
    <text evidence="1">Belongs to the SecB family.</text>
</comment>
<dbReference type="EMBL" id="CP000103">
    <property type="protein sequence ID" value="ABB74427.1"/>
    <property type="molecule type" value="Genomic_DNA"/>
</dbReference>
<dbReference type="RefSeq" id="WP_011380468.1">
    <property type="nucleotide sequence ID" value="NC_007614.1"/>
</dbReference>
<dbReference type="SMR" id="Q2Y9Z4"/>
<dbReference type="STRING" id="323848.Nmul_A1124"/>
<dbReference type="KEGG" id="nmu:Nmul_A1124"/>
<dbReference type="eggNOG" id="COG1952">
    <property type="taxonomic scope" value="Bacteria"/>
</dbReference>
<dbReference type="HOGENOM" id="CLU_111574_1_0_4"/>
<dbReference type="OrthoDB" id="9795145at2"/>
<dbReference type="Proteomes" id="UP000002718">
    <property type="component" value="Chromosome"/>
</dbReference>
<dbReference type="GO" id="GO:0005737">
    <property type="term" value="C:cytoplasm"/>
    <property type="evidence" value="ECO:0007669"/>
    <property type="project" value="UniProtKB-SubCell"/>
</dbReference>
<dbReference type="GO" id="GO:0051082">
    <property type="term" value="F:unfolded protein binding"/>
    <property type="evidence" value="ECO:0007669"/>
    <property type="project" value="InterPro"/>
</dbReference>
<dbReference type="GO" id="GO:0006457">
    <property type="term" value="P:protein folding"/>
    <property type="evidence" value="ECO:0007669"/>
    <property type="project" value="UniProtKB-UniRule"/>
</dbReference>
<dbReference type="GO" id="GO:0051262">
    <property type="term" value="P:protein tetramerization"/>
    <property type="evidence" value="ECO:0007669"/>
    <property type="project" value="InterPro"/>
</dbReference>
<dbReference type="GO" id="GO:0015031">
    <property type="term" value="P:protein transport"/>
    <property type="evidence" value="ECO:0007669"/>
    <property type="project" value="UniProtKB-UniRule"/>
</dbReference>
<dbReference type="Gene3D" id="3.10.420.10">
    <property type="entry name" value="SecB-like"/>
    <property type="match status" value="1"/>
</dbReference>
<dbReference type="HAMAP" id="MF_00821">
    <property type="entry name" value="SecB"/>
    <property type="match status" value="1"/>
</dbReference>
<dbReference type="InterPro" id="IPR003708">
    <property type="entry name" value="SecB"/>
</dbReference>
<dbReference type="InterPro" id="IPR035958">
    <property type="entry name" value="SecB-like_sf"/>
</dbReference>
<dbReference type="NCBIfam" id="NF004392">
    <property type="entry name" value="PRK05751.1-3"/>
    <property type="match status" value="1"/>
</dbReference>
<dbReference type="NCBIfam" id="NF004393">
    <property type="entry name" value="PRK05751.1-4"/>
    <property type="match status" value="1"/>
</dbReference>
<dbReference type="NCBIfam" id="NF004394">
    <property type="entry name" value="PRK05751.1-5"/>
    <property type="match status" value="1"/>
</dbReference>
<dbReference type="NCBIfam" id="TIGR00809">
    <property type="entry name" value="secB"/>
    <property type="match status" value="1"/>
</dbReference>
<dbReference type="PANTHER" id="PTHR36918">
    <property type="match status" value="1"/>
</dbReference>
<dbReference type="PANTHER" id="PTHR36918:SF1">
    <property type="entry name" value="PROTEIN-EXPORT PROTEIN SECB"/>
    <property type="match status" value="1"/>
</dbReference>
<dbReference type="Pfam" id="PF02556">
    <property type="entry name" value="SecB"/>
    <property type="match status" value="1"/>
</dbReference>
<dbReference type="PRINTS" id="PR01594">
    <property type="entry name" value="SECBCHAPRONE"/>
</dbReference>
<dbReference type="SUPFAM" id="SSF54611">
    <property type="entry name" value="SecB-like"/>
    <property type="match status" value="1"/>
</dbReference>
<gene>
    <name evidence="1" type="primary">secB</name>
    <name type="ordered locus">Nmul_A1124</name>
</gene>
<organism>
    <name type="scientific">Nitrosospira multiformis (strain ATCC 25196 / NCIMB 11849 / C 71)</name>
    <dbReference type="NCBI Taxonomy" id="323848"/>
    <lineage>
        <taxon>Bacteria</taxon>
        <taxon>Pseudomonadati</taxon>
        <taxon>Pseudomonadota</taxon>
        <taxon>Betaproteobacteria</taxon>
        <taxon>Nitrosomonadales</taxon>
        <taxon>Nitrosomonadaceae</taxon>
        <taxon>Nitrosospira</taxon>
    </lineage>
</organism>
<reference key="1">
    <citation type="submission" date="2005-08" db="EMBL/GenBank/DDBJ databases">
        <title>Complete sequence of chromosome 1 of Nitrosospira multiformis ATCC 25196.</title>
        <authorList>
            <person name="Copeland A."/>
            <person name="Lucas S."/>
            <person name="Lapidus A."/>
            <person name="Barry K."/>
            <person name="Detter J.C."/>
            <person name="Glavina T."/>
            <person name="Hammon N."/>
            <person name="Israni S."/>
            <person name="Pitluck S."/>
            <person name="Chain P."/>
            <person name="Malfatti S."/>
            <person name="Shin M."/>
            <person name="Vergez L."/>
            <person name="Schmutz J."/>
            <person name="Larimer F."/>
            <person name="Land M."/>
            <person name="Hauser L."/>
            <person name="Kyrpides N."/>
            <person name="Lykidis A."/>
            <person name="Richardson P."/>
        </authorList>
    </citation>
    <scope>NUCLEOTIDE SEQUENCE [LARGE SCALE GENOMIC DNA]</scope>
    <source>
        <strain>ATCC 25196 / NCIMB 11849 / C 71</strain>
    </source>
</reference>
<protein>
    <recommendedName>
        <fullName evidence="1">Protein-export protein SecB</fullName>
    </recommendedName>
</protein>
<keyword id="KW-0143">Chaperone</keyword>
<keyword id="KW-0963">Cytoplasm</keyword>
<keyword id="KW-0653">Protein transport</keyword>
<keyword id="KW-1185">Reference proteome</keyword>
<keyword id="KW-0811">Translocation</keyword>
<keyword id="KW-0813">Transport</keyword>
<sequence length="159" mass="18199">MSDEQQQPVFSIEKVYVKDLSVEIPNAPRIYLERETPEVNIQLHSKSERIDETLYEVVLTTTVTAKIKDKTMFLVEIQQGGVFQIRHVPEAEMELVLGIACPNILFPYLREAVSDTVTRAGFHPVILNPVNFEALYYQRKQQTENSAAPQTPETQQITH</sequence>
<evidence type="ECO:0000255" key="1">
    <source>
        <dbReference type="HAMAP-Rule" id="MF_00821"/>
    </source>
</evidence>
<feature type="chain" id="PRO_1000062488" description="Protein-export protein SecB">
    <location>
        <begin position="1"/>
        <end position="159"/>
    </location>
</feature>
<name>SECB_NITMU</name>